<keyword id="KW-0143">Chaperone</keyword>
<keyword id="KW-0963">Cytoplasm</keyword>
<keyword id="KW-1185">Reference proteome</keyword>
<keyword id="KW-0346">Stress response</keyword>
<protein>
    <recommendedName>
        <fullName evidence="1">Protein GrpE</fullName>
    </recommendedName>
    <alternativeName>
        <fullName evidence="1">HSP-70 cofactor</fullName>
    </alternativeName>
</protein>
<gene>
    <name evidence="1" type="primary">grpE</name>
    <name type="ordered locus">Bphy_2499</name>
</gene>
<accession>B2JGE4</accession>
<dbReference type="EMBL" id="CP001043">
    <property type="protein sequence ID" value="ACC71672.1"/>
    <property type="molecule type" value="Genomic_DNA"/>
</dbReference>
<dbReference type="RefSeq" id="WP_012401876.1">
    <property type="nucleotide sequence ID" value="NC_010622.1"/>
</dbReference>
<dbReference type="SMR" id="B2JGE4"/>
<dbReference type="STRING" id="391038.Bphy_2499"/>
<dbReference type="KEGG" id="bph:Bphy_2499"/>
<dbReference type="eggNOG" id="COG0576">
    <property type="taxonomic scope" value="Bacteria"/>
</dbReference>
<dbReference type="HOGENOM" id="CLU_057217_6_1_4"/>
<dbReference type="OrthoDB" id="9789811at2"/>
<dbReference type="Proteomes" id="UP000001192">
    <property type="component" value="Chromosome 1"/>
</dbReference>
<dbReference type="GO" id="GO:0005829">
    <property type="term" value="C:cytosol"/>
    <property type="evidence" value="ECO:0007669"/>
    <property type="project" value="TreeGrafter"/>
</dbReference>
<dbReference type="GO" id="GO:0000774">
    <property type="term" value="F:adenyl-nucleotide exchange factor activity"/>
    <property type="evidence" value="ECO:0007669"/>
    <property type="project" value="InterPro"/>
</dbReference>
<dbReference type="GO" id="GO:0042803">
    <property type="term" value="F:protein homodimerization activity"/>
    <property type="evidence" value="ECO:0007669"/>
    <property type="project" value="InterPro"/>
</dbReference>
<dbReference type="GO" id="GO:0051087">
    <property type="term" value="F:protein-folding chaperone binding"/>
    <property type="evidence" value="ECO:0007669"/>
    <property type="project" value="InterPro"/>
</dbReference>
<dbReference type="GO" id="GO:0051082">
    <property type="term" value="F:unfolded protein binding"/>
    <property type="evidence" value="ECO:0007669"/>
    <property type="project" value="TreeGrafter"/>
</dbReference>
<dbReference type="GO" id="GO:0006457">
    <property type="term" value="P:protein folding"/>
    <property type="evidence" value="ECO:0007669"/>
    <property type="project" value="InterPro"/>
</dbReference>
<dbReference type="CDD" id="cd00446">
    <property type="entry name" value="GrpE"/>
    <property type="match status" value="1"/>
</dbReference>
<dbReference type="FunFam" id="2.30.22.10:FF:000001">
    <property type="entry name" value="Protein GrpE"/>
    <property type="match status" value="1"/>
</dbReference>
<dbReference type="Gene3D" id="3.90.20.20">
    <property type="match status" value="1"/>
</dbReference>
<dbReference type="Gene3D" id="2.30.22.10">
    <property type="entry name" value="Head domain of nucleotide exchange factor GrpE"/>
    <property type="match status" value="1"/>
</dbReference>
<dbReference type="HAMAP" id="MF_01151">
    <property type="entry name" value="GrpE"/>
    <property type="match status" value="1"/>
</dbReference>
<dbReference type="InterPro" id="IPR000740">
    <property type="entry name" value="GrpE"/>
</dbReference>
<dbReference type="InterPro" id="IPR013805">
    <property type="entry name" value="GrpE_coiled_coil"/>
</dbReference>
<dbReference type="InterPro" id="IPR009012">
    <property type="entry name" value="GrpE_head"/>
</dbReference>
<dbReference type="NCBIfam" id="NF010737">
    <property type="entry name" value="PRK14139.1"/>
    <property type="match status" value="1"/>
</dbReference>
<dbReference type="NCBIfam" id="NF010738">
    <property type="entry name" value="PRK14140.1"/>
    <property type="match status" value="1"/>
</dbReference>
<dbReference type="NCBIfam" id="NF010748">
    <property type="entry name" value="PRK14150.1"/>
    <property type="match status" value="1"/>
</dbReference>
<dbReference type="PANTHER" id="PTHR21237">
    <property type="entry name" value="GRPE PROTEIN"/>
    <property type="match status" value="1"/>
</dbReference>
<dbReference type="PANTHER" id="PTHR21237:SF23">
    <property type="entry name" value="GRPE PROTEIN HOMOLOG, MITOCHONDRIAL"/>
    <property type="match status" value="1"/>
</dbReference>
<dbReference type="Pfam" id="PF01025">
    <property type="entry name" value="GrpE"/>
    <property type="match status" value="1"/>
</dbReference>
<dbReference type="PRINTS" id="PR00773">
    <property type="entry name" value="GRPEPROTEIN"/>
</dbReference>
<dbReference type="SUPFAM" id="SSF58014">
    <property type="entry name" value="Coiled-coil domain of nucleotide exchange factor GrpE"/>
    <property type="match status" value="1"/>
</dbReference>
<dbReference type="SUPFAM" id="SSF51064">
    <property type="entry name" value="Head domain of nucleotide exchange factor GrpE"/>
    <property type="match status" value="1"/>
</dbReference>
<dbReference type="PROSITE" id="PS01071">
    <property type="entry name" value="GRPE"/>
    <property type="match status" value="1"/>
</dbReference>
<proteinExistence type="inferred from homology"/>
<reference key="1">
    <citation type="journal article" date="2014" name="Stand. Genomic Sci.">
        <title>Complete genome sequence of Burkholderia phymatum STM815(T), a broad host range and efficient nitrogen-fixing symbiont of Mimosa species.</title>
        <authorList>
            <person name="Moulin L."/>
            <person name="Klonowska A."/>
            <person name="Caroline B."/>
            <person name="Booth K."/>
            <person name="Vriezen J.A."/>
            <person name="Melkonian R."/>
            <person name="James E.K."/>
            <person name="Young J.P."/>
            <person name="Bena G."/>
            <person name="Hauser L."/>
            <person name="Land M."/>
            <person name="Kyrpides N."/>
            <person name="Bruce D."/>
            <person name="Chain P."/>
            <person name="Copeland A."/>
            <person name="Pitluck S."/>
            <person name="Woyke T."/>
            <person name="Lizotte-Waniewski M."/>
            <person name="Bristow J."/>
            <person name="Riley M."/>
        </authorList>
    </citation>
    <scope>NUCLEOTIDE SEQUENCE [LARGE SCALE GENOMIC DNA]</scope>
    <source>
        <strain>DSM 17167 / CIP 108236 / LMG 21445 / STM815</strain>
    </source>
</reference>
<organism>
    <name type="scientific">Paraburkholderia phymatum (strain DSM 17167 / CIP 108236 / LMG 21445 / STM815)</name>
    <name type="common">Burkholderia phymatum</name>
    <dbReference type="NCBI Taxonomy" id="391038"/>
    <lineage>
        <taxon>Bacteria</taxon>
        <taxon>Pseudomonadati</taxon>
        <taxon>Pseudomonadota</taxon>
        <taxon>Betaproteobacteria</taxon>
        <taxon>Burkholderiales</taxon>
        <taxon>Burkholderiaceae</taxon>
        <taxon>Paraburkholderia</taxon>
    </lineage>
</organism>
<comment type="function">
    <text evidence="1">Participates actively in the response to hyperosmotic and heat shock by preventing the aggregation of stress-denatured proteins, in association with DnaK and GrpE. It is the nucleotide exchange factor for DnaK and may function as a thermosensor. Unfolded proteins bind initially to DnaJ; upon interaction with the DnaJ-bound protein, DnaK hydrolyzes its bound ATP, resulting in the formation of a stable complex. GrpE releases ADP from DnaK; ATP binding to DnaK triggers the release of the substrate protein, thus completing the reaction cycle. Several rounds of ATP-dependent interactions between DnaJ, DnaK and GrpE are required for fully efficient folding.</text>
</comment>
<comment type="subunit">
    <text evidence="1">Homodimer.</text>
</comment>
<comment type="subcellular location">
    <subcellularLocation>
        <location evidence="1">Cytoplasm</location>
    </subcellularLocation>
</comment>
<comment type="similarity">
    <text evidence="1">Belongs to the GrpE family.</text>
</comment>
<feature type="chain" id="PRO_1000137550" description="Protein GrpE">
    <location>
        <begin position="1"/>
        <end position="202"/>
    </location>
</feature>
<feature type="region of interest" description="Disordered" evidence="2">
    <location>
        <begin position="1"/>
        <end position="58"/>
    </location>
</feature>
<feature type="compositionally biased region" description="Polar residues" evidence="2">
    <location>
        <begin position="1"/>
        <end position="14"/>
    </location>
</feature>
<feature type="compositionally biased region" description="Low complexity" evidence="2">
    <location>
        <begin position="21"/>
        <end position="58"/>
    </location>
</feature>
<evidence type="ECO:0000255" key="1">
    <source>
        <dbReference type="HAMAP-Rule" id="MF_01151"/>
    </source>
</evidence>
<evidence type="ECO:0000256" key="2">
    <source>
        <dbReference type="SAM" id="MobiDB-lite"/>
    </source>
</evidence>
<name>GRPE_PARP8</name>
<sequence>MENTQENPTSQNPTPADEAARQAAEAASGEPQDQARQPAAAAGEQPAQAQPAGAEAALAEAQAKLAELQESFLRAKAETENVRRRGQEDVAKAHKFAIESFAEHLLPVMDSLEAAVAHSTDDLAKVREGVELTLRQLTGALEKGKVVALNPVGEKFDPHRHQAISMVPADQEPNTVVAVLQKGYVIADRVLRPALVTVAAPK</sequence>